<proteinExistence type="evidence at transcript level"/>
<reference key="1">
    <citation type="journal article" date="1993" name="Plant Mol. Biol.">
        <title>Induction of a proteinase inhibitor II-class gene by auxin in tomato roots.</title>
        <authorList>
            <person name="Taylor B.H."/>
            <person name="Young R.J."/>
            <person name="Scheuring C.F."/>
        </authorList>
    </citation>
    <scope>NUCLEOTIDE SEQUENCE [MRNA]</scope>
    <source>
        <strain>cv. VFN8</strain>
        <tissue>Seedling root</tissue>
    </source>
</reference>
<reference key="2">
    <citation type="journal article" date="1994" name="Plant Physiol.">
        <title>An auxin-inducible proteinase inhibitor gene from tomato.</title>
        <authorList>
            <person name="Young R.J."/>
            <person name="Scheuring C.F."/>
            <person name="Harris-Haller L."/>
            <person name="Taylor B.H."/>
        </authorList>
    </citation>
    <scope>NUCLEOTIDE SEQUENCE</scope>
    <source>
        <strain>cv. VFN8</strain>
    </source>
</reference>
<protein>
    <recommendedName>
        <fullName>Proteinase inhibitor type-2 TR8</fullName>
    </recommendedName>
    <alternativeName>
        <fullName>Proteinase inhibitor type II TR8</fullName>
    </alternativeName>
</protein>
<sequence>MAIYKVALLLLFGMILLASDFEHAKACTKECDTRIDFGICPLLETKRVEGLCTNCCAGKKGCKYFSKDGTYICDGESEWVSEKNNNLKKACTKECDTRIDFGICPLLETKRVEGLCTNCCAGKKGCKYFSKDGTYICDGESEWVSEKDNNLEKDCTKECDTRIDFGICPLLETKRVKGLCTNCCAGKKGCKYFSADGTYICDGESEWVSEGENDLQKSNVAIS</sequence>
<dbReference type="EMBL" id="L21194">
    <property type="protein sequence ID" value="AAA16881.1"/>
    <property type="molecule type" value="mRNA"/>
</dbReference>
<dbReference type="EMBL" id="L25128">
    <property type="protein sequence ID" value="AAC37397.1"/>
    <property type="molecule type" value="Unassigned_DNA"/>
</dbReference>
<dbReference type="PIR" id="S43338">
    <property type="entry name" value="S43338"/>
</dbReference>
<dbReference type="RefSeq" id="NP_001234661.1">
    <property type="nucleotide sequence ID" value="NM_001247732.1"/>
</dbReference>
<dbReference type="SMR" id="Q43710"/>
<dbReference type="PaxDb" id="4081-Solyc11g021060.1.1"/>
<dbReference type="EnsemblPlants" id="Solyc11g021060.2.1">
    <property type="protein sequence ID" value="Solyc11g021060.2.1"/>
    <property type="gene ID" value="Solyc11g021060.2"/>
</dbReference>
<dbReference type="GeneID" id="543962"/>
<dbReference type="Gramene" id="Solyc11g021060.2.1">
    <property type="protein sequence ID" value="Solyc11g021060.2.1"/>
    <property type="gene ID" value="Solyc11g021060.2"/>
</dbReference>
<dbReference type="KEGG" id="sly:543962"/>
<dbReference type="eggNOG" id="ENOG502SBHN">
    <property type="taxonomic scope" value="Eukaryota"/>
</dbReference>
<dbReference type="HOGENOM" id="CLU_118313_0_0_1"/>
<dbReference type="InParanoid" id="Q43710"/>
<dbReference type="OMA" id="KKGCKYF"/>
<dbReference type="OrthoDB" id="1286142at2759"/>
<dbReference type="PhylomeDB" id="Q43710"/>
<dbReference type="Proteomes" id="UP000004994">
    <property type="component" value="Chromosome 11"/>
</dbReference>
<dbReference type="GO" id="GO:0004867">
    <property type="term" value="F:serine-type endopeptidase inhibitor activity"/>
    <property type="evidence" value="ECO:0007669"/>
    <property type="project" value="UniProtKB-KW"/>
</dbReference>
<dbReference type="Gene3D" id="3.30.60.30">
    <property type="match status" value="4"/>
</dbReference>
<dbReference type="InterPro" id="IPR003465">
    <property type="entry name" value="Prot_inh_I20"/>
</dbReference>
<dbReference type="InterPro" id="IPR051391">
    <property type="entry name" value="Protease_inhibitor_I20"/>
</dbReference>
<dbReference type="PANTHER" id="PTHR33832:SF26">
    <property type="entry name" value="PROTEINASE INHIBITOR TYPE-2 TR8"/>
    <property type="match status" value="1"/>
</dbReference>
<dbReference type="PANTHER" id="PTHR33832">
    <property type="entry name" value="SERINE-TYPE ENDOPEPTIDASE INHIBITOR"/>
    <property type="match status" value="1"/>
</dbReference>
<dbReference type="Pfam" id="PF02428">
    <property type="entry name" value="Prot_inhib_II"/>
    <property type="match status" value="3"/>
</dbReference>
<dbReference type="SUPFAM" id="SSF100897">
    <property type="entry name" value="Plant proteinase inhibitors"/>
    <property type="match status" value="3"/>
</dbReference>
<feature type="signal peptide" evidence="2">
    <location>
        <begin position="1"/>
        <end position="24"/>
    </location>
</feature>
<feature type="chain" id="PRO_0000025311" description="Proteinase inhibitor type-2 TR8">
    <location>
        <begin position="25"/>
        <end position="223"/>
    </location>
</feature>
<feature type="repeat" description="1">
    <location>
        <begin position="24"/>
        <end position="81"/>
    </location>
</feature>
<feature type="repeat" description="2">
    <location>
        <begin position="88"/>
        <end position="145"/>
    </location>
</feature>
<feature type="repeat" description="3">
    <location>
        <begin position="152"/>
        <end position="209"/>
    </location>
</feature>
<feature type="site" description="Reactive bond for trypsin" evidence="3">
    <location>
        <begin position="29"/>
        <end position="30"/>
    </location>
</feature>
<feature type="site" description="Reactive bond for trypsin" evidence="3">
    <location>
        <begin position="93"/>
        <end position="94"/>
    </location>
</feature>
<feature type="site" description="Reactive bond for trypsin" evidence="3">
    <location>
        <begin position="157"/>
        <end position="158"/>
    </location>
</feature>
<feature type="disulfide bond" evidence="1">
    <location>
        <begin position="27"/>
        <end position="120"/>
    </location>
</feature>
<feature type="disulfide bond" evidence="1">
    <location>
        <begin position="31"/>
        <end position="116"/>
    </location>
</feature>
<feature type="disulfide bond" evidence="1">
    <location>
        <begin position="40"/>
        <end position="126"/>
    </location>
</feature>
<feature type="disulfide bond" evidence="1">
    <location>
        <begin position="52"/>
        <end position="95"/>
    </location>
</feature>
<feature type="disulfide bond" evidence="1">
    <location>
        <begin position="55"/>
        <end position="73"/>
    </location>
</feature>
<feature type="disulfide bond" evidence="1">
    <location>
        <begin position="56"/>
        <end position="91"/>
    </location>
</feature>
<feature type="disulfide bond" evidence="1">
    <location>
        <begin position="62"/>
        <end position="104"/>
    </location>
</feature>
<feature type="disulfide bond" evidence="1">
    <location>
        <begin position="119"/>
        <end position="137"/>
    </location>
</feature>
<evidence type="ECO:0000250" key="1"/>
<evidence type="ECO:0000255" key="2"/>
<evidence type="ECO:0000305" key="3"/>
<comment type="induction">
    <text>By auxin.</text>
</comment>
<comment type="similarity">
    <text evidence="3">Belongs to the protease inhibitor I20 (potato type II proteinase inhibitor) family.</text>
</comment>
<organism>
    <name type="scientific">Solanum lycopersicum</name>
    <name type="common">Tomato</name>
    <name type="synonym">Lycopersicon esculentum</name>
    <dbReference type="NCBI Taxonomy" id="4081"/>
    <lineage>
        <taxon>Eukaryota</taxon>
        <taxon>Viridiplantae</taxon>
        <taxon>Streptophyta</taxon>
        <taxon>Embryophyta</taxon>
        <taxon>Tracheophyta</taxon>
        <taxon>Spermatophyta</taxon>
        <taxon>Magnoliopsida</taxon>
        <taxon>eudicotyledons</taxon>
        <taxon>Gunneridae</taxon>
        <taxon>Pentapetalae</taxon>
        <taxon>asterids</taxon>
        <taxon>lamiids</taxon>
        <taxon>Solanales</taxon>
        <taxon>Solanaceae</taxon>
        <taxon>Solanoideae</taxon>
        <taxon>Solaneae</taxon>
        <taxon>Solanum</taxon>
        <taxon>Solanum subgen. Lycopersicon</taxon>
    </lineage>
</organism>
<name>IP22_SOLLC</name>
<accession>Q43710</accession>
<gene>
    <name type="primary">ARPI</name>
</gene>
<keyword id="KW-1015">Disulfide bond</keyword>
<keyword id="KW-0646">Protease inhibitor</keyword>
<keyword id="KW-1185">Reference proteome</keyword>
<keyword id="KW-0677">Repeat</keyword>
<keyword id="KW-0722">Serine protease inhibitor</keyword>
<keyword id="KW-0732">Signal</keyword>